<reference key="1">
    <citation type="submission" date="2008-08" db="EMBL/GenBank/DDBJ databases">
        <title>Complete sequence of Anaeromyxobacter sp. K.</title>
        <authorList>
            <consortium name="US DOE Joint Genome Institute"/>
            <person name="Lucas S."/>
            <person name="Copeland A."/>
            <person name="Lapidus A."/>
            <person name="Glavina del Rio T."/>
            <person name="Dalin E."/>
            <person name="Tice H."/>
            <person name="Bruce D."/>
            <person name="Goodwin L."/>
            <person name="Pitluck S."/>
            <person name="Saunders E."/>
            <person name="Brettin T."/>
            <person name="Detter J.C."/>
            <person name="Han C."/>
            <person name="Larimer F."/>
            <person name="Land M."/>
            <person name="Hauser L."/>
            <person name="Kyrpides N."/>
            <person name="Ovchinnikiva G."/>
            <person name="Beliaev A."/>
        </authorList>
    </citation>
    <scope>NUCLEOTIDE SEQUENCE [LARGE SCALE GENOMIC DNA]</scope>
    <source>
        <strain>K</strain>
    </source>
</reference>
<keyword id="KW-0548">Nucleotidyltransferase</keyword>
<keyword id="KW-0694">RNA-binding</keyword>
<keyword id="KW-0698">rRNA processing</keyword>
<keyword id="KW-0808">Transferase</keyword>
<keyword id="KW-0819">tRNA processing</keyword>
<keyword id="KW-0820">tRNA-binding</keyword>
<comment type="function">
    <text evidence="1">Phosphorolytic 3'-5' exoribonuclease that plays an important role in tRNA 3'-end maturation. Removes nucleotide residues following the 3'-CCA terminus of tRNAs; can also add nucleotides to the ends of RNA molecules by using nucleoside diphosphates as substrates, but this may not be physiologically important. Probably plays a role in initiation of 16S rRNA degradation (leading to ribosome degradation) during starvation.</text>
</comment>
<comment type="catalytic activity">
    <reaction evidence="1">
        <text>tRNA(n+1) + phosphate = tRNA(n) + a ribonucleoside 5'-diphosphate</text>
        <dbReference type="Rhea" id="RHEA:10628"/>
        <dbReference type="Rhea" id="RHEA-COMP:17343"/>
        <dbReference type="Rhea" id="RHEA-COMP:17344"/>
        <dbReference type="ChEBI" id="CHEBI:43474"/>
        <dbReference type="ChEBI" id="CHEBI:57930"/>
        <dbReference type="ChEBI" id="CHEBI:173114"/>
        <dbReference type="EC" id="2.7.7.56"/>
    </reaction>
</comment>
<comment type="subunit">
    <text evidence="1">Homohexameric ring arranged as a trimer of dimers.</text>
</comment>
<comment type="similarity">
    <text evidence="1">Belongs to the RNase PH family.</text>
</comment>
<sequence length="239" mass="25708">MRKNGRGELDLRPILLEPRVSKHAEGSCLVRFGDTHVLCTASVDEKVPPHVYGTGAGWVTAEYGMLPRSTHERMQREAARGKQTGRTLEIQRLVGRALRAAVDLRAIGPRTVTLDCDVIQADGGTRTAAITGAYVALVQAVRGIQKRRQLAQDPVKRSVAAVSVGIVAGQVHLDLDYDEDSTAEVDMNVVATGDGALVEVQGTAEGKPFPRAELDRMLDAALAGLSRLKELQEAALRTP</sequence>
<feature type="chain" id="PRO_1000129316" description="Ribonuclease PH">
    <location>
        <begin position="1"/>
        <end position="239"/>
    </location>
</feature>
<feature type="binding site" evidence="1">
    <location>
        <position position="86"/>
    </location>
    <ligand>
        <name>phosphate</name>
        <dbReference type="ChEBI" id="CHEBI:43474"/>
        <note>substrate</note>
    </ligand>
</feature>
<feature type="binding site" evidence="1">
    <location>
        <begin position="124"/>
        <end position="126"/>
    </location>
    <ligand>
        <name>phosphate</name>
        <dbReference type="ChEBI" id="CHEBI:43474"/>
        <note>substrate</note>
    </ligand>
</feature>
<organism>
    <name type="scientific">Anaeromyxobacter sp. (strain K)</name>
    <dbReference type="NCBI Taxonomy" id="447217"/>
    <lineage>
        <taxon>Bacteria</taxon>
        <taxon>Pseudomonadati</taxon>
        <taxon>Myxococcota</taxon>
        <taxon>Myxococcia</taxon>
        <taxon>Myxococcales</taxon>
        <taxon>Cystobacterineae</taxon>
        <taxon>Anaeromyxobacteraceae</taxon>
        <taxon>Anaeromyxobacter</taxon>
    </lineage>
</organism>
<gene>
    <name evidence="1" type="primary">rph</name>
    <name type="ordered locus">AnaeK_3443</name>
</gene>
<proteinExistence type="inferred from homology"/>
<accession>B4UBI2</accession>
<protein>
    <recommendedName>
        <fullName evidence="1">Ribonuclease PH</fullName>
        <shortName evidence="1">RNase PH</shortName>
        <ecNumber evidence="1">2.7.7.56</ecNumber>
    </recommendedName>
    <alternativeName>
        <fullName evidence="1">tRNA nucleotidyltransferase</fullName>
    </alternativeName>
</protein>
<dbReference type="EC" id="2.7.7.56" evidence="1"/>
<dbReference type="EMBL" id="CP001131">
    <property type="protein sequence ID" value="ACG74656.1"/>
    <property type="molecule type" value="Genomic_DNA"/>
</dbReference>
<dbReference type="RefSeq" id="WP_012527429.1">
    <property type="nucleotide sequence ID" value="NC_011145.1"/>
</dbReference>
<dbReference type="SMR" id="B4UBI2"/>
<dbReference type="KEGG" id="ank:AnaeK_3443"/>
<dbReference type="HOGENOM" id="CLU_050858_0_0_7"/>
<dbReference type="OrthoDB" id="9802265at2"/>
<dbReference type="Proteomes" id="UP000001871">
    <property type="component" value="Chromosome"/>
</dbReference>
<dbReference type="GO" id="GO:0000175">
    <property type="term" value="F:3'-5'-RNA exonuclease activity"/>
    <property type="evidence" value="ECO:0007669"/>
    <property type="project" value="UniProtKB-UniRule"/>
</dbReference>
<dbReference type="GO" id="GO:0000049">
    <property type="term" value="F:tRNA binding"/>
    <property type="evidence" value="ECO:0007669"/>
    <property type="project" value="UniProtKB-UniRule"/>
</dbReference>
<dbReference type="GO" id="GO:0009022">
    <property type="term" value="F:tRNA nucleotidyltransferase activity"/>
    <property type="evidence" value="ECO:0007669"/>
    <property type="project" value="UniProtKB-UniRule"/>
</dbReference>
<dbReference type="GO" id="GO:0016075">
    <property type="term" value="P:rRNA catabolic process"/>
    <property type="evidence" value="ECO:0007669"/>
    <property type="project" value="UniProtKB-UniRule"/>
</dbReference>
<dbReference type="GO" id="GO:0006364">
    <property type="term" value="P:rRNA processing"/>
    <property type="evidence" value="ECO:0007669"/>
    <property type="project" value="UniProtKB-KW"/>
</dbReference>
<dbReference type="GO" id="GO:0008033">
    <property type="term" value="P:tRNA processing"/>
    <property type="evidence" value="ECO:0007669"/>
    <property type="project" value="UniProtKB-UniRule"/>
</dbReference>
<dbReference type="CDD" id="cd11362">
    <property type="entry name" value="RNase_PH_bact"/>
    <property type="match status" value="1"/>
</dbReference>
<dbReference type="FunFam" id="3.30.230.70:FF:000003">
    <property type="entry name" value="Ribonuclease PH"/>
    <property type="match status" value="1"/>
</dbReference>
<dbReference type="Gene3D" id="3.30.230.70">
    <property type="entry name" value="GHMP Kinase, N-terminal domain"/>
    <property type="match status" value="1"/>
</dbReference>
<dbReference type="HAMAP" id="MF_00564">
    <property type="entry name" value="RNase_PH"/>
    <property type="match status" value="1"/>
</dbReference>
<dbReference type="InterPro" id="IPR001247">
    <property type="entry name" value="ExoRNase_PH_dom1"/>
</dbReference>
<dbReference type="InterPro" id="IPR015847">
    <property type="entry name" value="ExoRNase_PH_dom2"/>
</dbReference>
<dbReference type="InterPro" id="IPR036345">
    <property type="entry name" value="ExoRNase_PH_dom2_sf"/>
</dbReference>
<dbReference type="InterPro" id="IPR027408">
    <property type="entry name" value="PNPase/RNase_PH_dom_sf"/>
</dbReference>
<dbReference type="InterPro" id="IPR020568">
    <property type="entry name" value="Ribosomal_Su5_D2-typ_SF"/>
</dbReference>
<dbReference type="InterPro" id="IPR050080">
    <property type="entry name" value="RNase_PH"/>
</dbReference>
<dbReference type="InterPro" id="IPR002381">
    <property type="entry name" value="RNase_PH_bac-type"/>
</dbReference>
<dbReference type="InterPro" id="IPR018336">
    <property type="entry name" value="RNase_PH_CS"/>
</dbReference>
<dbReference type="NCBIfam" id="TIGR01966">
    <property type="entry name" value="RNasePH"/>
    <property type="match status" value="1"/>
</dbReference>
<dbReference type="PANTHER" id="PTHR11953">
    <property type="entry name" value="EXOSOME COMPLEX COMPONENT"/>
    <property type="match status" value="1"/>
</dbReference>
<dbReference type="PANTHER" id="PTHR11953:SF0">
    <property type="entry name" value="EXOSOME COMPLEX COMPONENT RRP41"/>
    <property type="match status" value="1"/>
</dbReference>
<dbReference type="Pfam" id="PF01138">
    <property type="entry name" value="RNase_PH"/>
    <property type="match status" value="1"/>
</dbReference>
<dbReference type="Pfam" id="PF03725">
    <property type="entry name" value="RNase_PH_C"/>
    <property type="match status" value="1"/>
</dbReference>
<dbReference type="SUPFAM" id="SSF55666">
    <property type="entry name" value="Ribonuclease PH domain 2-like"/>
    <property type="match status" value="1"/>
</dbReference>
<dbReference type="SUPFAM" id="SSF54211">
    <property type="entry name" value="Ribosomal protein S5 domain 2-like"/>
    <property type="match status" value="1"/>
</dbReference>
<dbReference type="PROSITE" id="PS01277">
    <property type="entry name" value="RIBONUCLEASE_PH"/>
    <property type="match status" value="1"/>
</dbReference>
<name>RNPH_ANASK</name>
<evidence type="ECO:0000255" key="1">
    <source>
        <dbReference type="HAMAP-Rule" id="MF_00564"/>
    </source>
</evidence>